<dbReference type="EC" id="3.6.-.-" evidence="1"/>
<dbReference type="EMBL" id="CP001050">
    <property type="protein sequence ID" value="ACF31176.1"/>
    <property type="molecule type" value="Genomic_DNA"/>
</dbReference>
<dbReference type="RefSeq" id="WP_003687082.1">
    <property type="nucleotide sequence ID" value="NC_011035.1"/>
</dbReference>
<dbReference type="SMR" id="B4RRB9"/>
<dbReference type="GeneID" id="66754435"/>
<dbReference type="KEGG" id="ngk:NGK_2577"/>
<dbReference type="HOGENOM" id="CLU_019624_4_1_4"/>
<dbReference type="Proteomes" id="UP000002564">
    <property type="component" value="Chromosome"/>
</dbReference>
<dbReference type="GO" id="GO:0005829">
    <property type="term" value="C:cytosol"/>
    <property type="evidence" value="ECO:0007669"/>
    <property type="project" value="TreeGrafter"/>
</dbReference>
<dbReference type="GO" id="GO:0005525">
    <property type="term" value="F:GTP binding"/>
    <property type="evidence" value="ECO:0007669"/>
    <property type="project" value="UniProtKB-UniRule"/>
</dbReference>
<dbReference type="GO" id="GO:0003924">
    <property type="term" value="F:GTPase activity"/>
    <property type="evidence" value="ECO:0007669"/>
    <property type="project" value="UniProtKB-UniRule"/>
</dbReference>
<dbReference type="GO" id="GO:0046872">
    <property type="term" value="F:metal ion binding"/>
    <property type="evidence" value="ECO:0007669"/>
    <property type="project" value="UniProtKB-KW"/>
</dbReference>
<dbReference type="GO" id="GO:0030488">
    <property type="term" value="P:tRNA methylation"/>
    <property type="evidence" value="ECO:0007669"/>
    <property type="project" value="TreeGrafter"/>
</dbReference>
<dbReference type="GO" id="GO:0002098">
    <property type="term" value="P:tRNA wobble uridine modification"/>
    <property type="evidence" value="ECO:0007669"/>
    <property type="project" value="TreeGrafter"/>
</dbReference>
<dbReference type="CDD" id="cd04164">
    <property type="entry name" value="trmE"/>
    <property type="match status" value="1"/>
</dbReference>
<dbReference type="CDD" id="cd14858">
    <property type="entry name" value="TrmE_N"/>
    <property type="match status" value="1"/>
</dbReference>
<dbReference type="FunFam" id="3.30.1360.120:FF:000001">
    <property type="entry name" value="tRNA modification GTPase MnmE"/>
    <property type="match status" value="1"/>
</dbReference>
<dbReference type="FunFam" id="3.40.50.300:FF:001376">
    <property type="entry name" value="tRNA modification GTPase MnmE"/>
    <property type="match status" value="1"/>
</dbReference>
<dbReference type="Gene3D" id="3.40.50.300">
    <property type="entry name" value="P-loop containing nucleotide triphosphate hydrolases"/>
    <property type="match status" value="1"/>
</dbReference>
<dbReference type="Gene3D" id="3.30.1360.120">
    <property type="entry name" value="Probable tRNA modification gtpase trme, domain 1"/>
    <property type="match status" value="1"/>
</dbReference>
<dbReference type="Gene3D" id="1.20.120.430">
    <property type="entry name" value="tRNA modification GTPase MnmE domain 2"/>
    <property type="match status" value="1"/>
</dbReference>
<dbReference type="HAMAP" id="MF_00379">
    <property type="entry name" value="GTPase_MnmE"/>
    <property type="match status" value="1"/>
</dbReference>
<dbReference type="InterPro" id="IPR031168">
    <property type="entry name" value="G_TrmE"/>
</dbReference>
<dbReference type="InterPro" id="IPR006073">
    <property type="entry name" value="GTP-bd"/>
</dbReference>
<dbReference type="InterPro" id="IPR018948">
    <property type="entry name" value="GTP-bd_TrmE_N"/>
</dbReference>
<dbReference type="InterPro" id="IPR004520">
    <property type="entry name" value="GTPase_MnmE"/>
</dbReference>
<dbReference type="InterPro" id="IPR027368">
    <property type="entry name" value="MnmE_dom2"/>
</dbReference>
<dbReference type="InterPro" id="IPR025867">
    <property type="entry name" value="MnmE_helical"/>
</dbReference>
<dbReference type="InterPro" id="IPR027417">
    <property type="entry name" value="P-loop_NTPase"/>
</dbReference>
<dbReference type="InterPro" id="IPR005225">
    <property type="entry name" value="Small_GTP-bd"/>
</dbReference>
<dbReference type="InterPro" id="IPR027266">
    <property type="entry name" value="TrmE/GcvT_dom1"/>
</dbReference>
<dbReference type="NCBIfam" id="TIGR00450">
    <property type="entry name" value="mnmE_trmE_thdF"/>
    <property type="match status" value="1"/>
</dbReference>
<dbReference type="NCBIfam" id="NF003661">
    <property type="entry name" value="PRK05291.1-3"/>
    <property type="match status" value="1"/>
</dbReference>
<dbReference type="NCBIfam" id="TIGR00231">
    <property type="entry name" value="small_GTP"/>
    <property type="match status" value="1"/>
</dbReference>
<dbReference type="PANTHER" id="PTHR42714">
    <property type="entry name" value="TRNA MODIFICATION GTPASE GTPBP3"/>
    <property type="match status" value="1"/>
</dbReference>
<dbReference type="PANTHER" id="PTHR42714:SF2">
    <property type="entry name" value="TRNA MODIFICATION GTPASE GTPBP3, MITOCHONDRIAL"/>
    <property type="match status" value="1"/>
</dbReference>
<dbReference type="Pfam" id="PF01926">
    <property type="entry name" value="MMR_HSR1"/>
    <property type="match status" value="1"/>
</dbReference>
<dbReference type="Pfam" id="PF12631">
    <property type="entry name" value="MnmE_helical"/>
    <property type="match status" value="1"/>
</dbReference>
<dbReference type="Pfam" id="PF10396">
    <property type="entry name" value="TrmE_N"/>
    <property type="match status" value="1"/>
</dbReference>
<dbReference type="SUPFAM" id="SSF52540">
    <property type="entry name" value="P-loop containing nucleoside triphosphate hydrolases"/>
    <property type="match status" value="1"/>
</dbReference>
<dbReference type="SUPFAM" id="SSF116878">
    <property type="entry name" value="TrmE connector domain"/>
    <property type="match status" value="1"/>
</dbReference>
<dbReference type="PROSITE" id="PS51709">
    <property type="entry name" value="G_TRME"/>
    <property type="match status" value="1"/>
</dbReference>
<sequence>MSDNVPTIAAVATAPGRGGVGVIRISGKNLLPMAQALCGKTPEPRVATYADFTDADGQAIDSGLLLFFAAPASFTGEDVIELQGHGGPVVMEMLLNRCLELGARLAEPGEFTKRAFLNDKLDLAQAEGVADLIDASGRSAARLALRSLKGDFSRRIHGLVEGLITLRMLVEAALDFPEEDIDFLEAADARGKLDGLRRAVDDVLANAQQGAILREGLNVVLVGAPNVGKSSLLNALAGDEVAIVTDIAGTTRDAVRERILIDGVPVHIVDTAGLRETDDVVERIGIERSRKAVSEADVALVLVDPREGLNEKTRMILDTLPSDLKRIEIHSKSDLHAHAAGGFGTGAETVIALSAKTGDGLDALKRTLLCEAGWQGESEGLFLARTRHVNALKAAQEELSLAALCGNHQIELFAEHLRLAQVACGEITGEFTADDLLGVIFSRFCIGK</sequence>
<gene>
    <name evidence="1" type="primary">mnmE</name>
    <name evidence="1" type="synonym">trmE</name>
    <name type="ordered locus">NGK_2577</name>
</gene>
<keyword id="KW-0963">Cytoplasm</keyword>
<keyword id="KW-0342">GTP-binding</keyword>
<keyword id="KW-0378">Hydrolase</keyword>
<keyword id="KW-0460">Magnesium</keyword>
<keyword id="KW-0479">Metal-binding</keyword>
<keyword id="KW-0547">Nucleotide-binding</keyword>
<keyword id="KW-0630">Potassium</keyword>
<keyword id="KW-0819">tRNA processing</keyword>
<evidence type="ECO:0000255" key="1">
    <source>
        <dbReference type="HAMAP-Rule" id="MF_00379"/>
    </source>
</evidence>
<reference key="1">
    <citation type="journal article" date="2008" name="J. Bacteriol.">
        <title>Complete genome sequence of Neisseria gonorrhoeae NCCP11945.</title>
        <authorList>
            <person name="Chung G.T."/>
            <person name="Yoo J.S."/>
            <person name="Oh H.B."/>
            <person name="Lee Y.S."/>
            <person name="Cha S.H."/>
            <person name="Kim S.J."/>
            <person name="Yoo C.K."/>
        </authorList>
    </citation>
    <scope>NUCLEOTIDE SEQUENCE [LARGE SCALE GENOMIC DNA]</scope>
    <source>
        <strain>NCCP11945</strain>
    </source>
</reference>
<accession>B4RRB9</accession>
<protein>
    <recommendedName>
        <fullName evidence="1">tRNA modification GTPase MnmE</fullName>
        <ecNumber evidence="1">3.6.-.-</ecNumber>
    </recommendedName>
</protein>
<proteinExistence type="inferred from homology"/>
<name>MNME_NEIG2</name>
<comment type="function">
    <text evidence="1">Exhibits a very high intrinsic GTPase hydrolysis rate. Involved in the addition of a carboxymethylaminomethyl (cmnm) group at the wobble position (U34) of certain tRNAs, forming tRNA-cmnm(5)s(2)U34.</text>
</comment>
<comment type="cofactor">
    <cofactor evidence="1">
        <name>K(+)</name>
        <dbReference type="ChEBI" id="CHEBI:29103"/>
    </cofactor>
    <text evidence="1">Binds 1 potassium ion per subunit.</text>
</comment>
<comment type="subunit">
    <text evidence="1">Homodimer. Heterotetramer of two MnmE and two MnmG subunits.</text>
</comment>
<comment type="subcellular location">
    <subcellularLocation>
        <location evidence="1">Cytoplasm</location>
    </subcellularLocation>
</comment>
<comment type="similarity">
    <text evidence="1">Belongs to the TRAFAC class TrmE-Era-EngA-EngB-Septin-like GTPase superfamily. TrmE GTPase family.</text>
</comment>
<feature type="chain" id="PRO_1000122113" description="tRNA modification GTPase MnmE">
    <location>
        <begin position="1"/>
        <end position="448"/>
    </location>
</feature>
<feature type="domain" description="TrmE-type G">
    <location>
        <begin position="216"/>
        <end position="373"/>
    </location>
</feature>
<feature type="binding site" evidence="1">
    <location>
        <position position="24"/>
    </location>
    <ligand>
        <name>(6S)-5-formyl-5,6,7,8-tetrahydrofolate</name>
        <dbReference type="ChEBI" id="CHEBI:57457"/>
    </ligand>
</feature>
<feature type="binding site" evidence="1">
    <location>
        <position position="81"/>
    </location>
    <ligand>
        <name>(6S)-5-formyl-5,6,7,8-tetrahydrofolate</name>
        <dbReference type="ChEBI" id="CHEBI:57457"/>
    </ligand>
</feature>
<feature type="binding site" evidence="1">
    <location>
        <position position="120"/>
    </location>
    <ligand>
        <name>(6S)-5-formyl-5,6,7,8-tetrahydrofolate</name>
        <dbReference type="ChEBI" id="CHEBI:57457"/>
    </ligand>
</feature>
<feature type="binding site" evidence="1">
    <location>
        <begin position="226"/>
        <end position="231"/>
    </location>
    <ligand>
        <name>GTP</name>
        <dbReference type="ChEBI" id="CHEBI:37565"/>
    </ligand>
</feature>
<feature type="binding site" evidence="1">
    <location>
        <position position="226"/>
    </location>
    <ligand>
        <name>K(+)</name>
        <dbReference type="ChEBI" id="CHEBI:29103"/>
    </ligand>
</feature>
<feature type="binding site" evidence="1">
    <location>
        <position position="230"/>
    </location>
    <ligand>
        <name>Mg(2+)</name>
        <dbReference type="ChEBI" id="CHEBI:18420"/>
    </ligand>
</feature>
<feature type="binding site" evidence="1">
    <location>
        <begin position="245"/>
        <end position="251"/>
    </location>
    <ligand>
        <name>GTP</name>
        <dbReference type="ChEBI" id="CHEBI:37565"/>
    </ligand>
</feature>
<feature type="binding site" evidence="1">
    <location>
        <position position="245"/>
    </location>
    <ligand>
        <name>K(+)</name>
        <dbReference type="ChEBI" id="CHEBI:29103"/>
    </ligand>
</feature>
<feature type="binding site" evidence="1">
    <location>
        <position position="247"/>
    </location>
    <ligand>
        <name>K(+)</name>
        <dbReference type="ChEBI" id="CHEBI:29103"/>
    </ligand>
</feature>
<feature type="binding site" evidence="1">
    <location>
        <position position="250"/>
    </location>
    <ligand>
        <name>K(+)</name>
        <dbReference type="ChEBI" id="CHEBI:29103"/>
    </ligand>
</feature>
<feature type="binding site" evidence="1">
    <location>
        <position position="251"/>
    </location>
    <ligand>
        <name>Mg(2+)</name>
        <dbReference type="ChEBI" id="CHEBI:18420"/>
    </ligand>
</feature>
<feature type="binding site" evidence="1">
    <location>
        <begin position="270"/>
        <end position="273"/>
    </location>
    <ligand>
        <name>GTP</name>
        <dbReference type="ChEBI" id="CHEBI:37565"/>
    </ligand>
</feature>
<feature type="binding site" evidence="1">
    <location>
        <position position="448"/>
    </location>
    <ligand>
        <name>(6S)-5-formyl-5,6,7,8-tetrahydrofolate</name>
        <dbReference type="ChEBI" id="CHEBI:57457"/>
    </ligand>
</feature>
<organism>
    <name type="scientific">Neisseria gonorrhoeae (strain NCCP11945)</name>
    <dbReference type="NCBI Taxonomy" id="521006"/>
    <lineage>
        <taxon>Bacteria</taxon>
        <taxon>Pseudomonadati</taxon>
        <taxon>Pseudomonadota</taxon>
        <taxon>Betaproteobacteria</taxon>
        <taxon>Neisseriales</taxon>
        <taxon>Neisseriaceae</taxon>
        <taxon>Neisseria</taxon>
    </lineage>
</organism>